<evidence type="ECO:0000250" key="1"/>
<evidence type="ECO:0000269" key="2">
    <source>
    </source>
</evidence>
<evidence type="ECO:0000305" key="3"/>
<name>LSHB_PIG</name>
<dbReference type="EMBL" id="D00579">
    <property type="protein sequence ID" value="BAA00457.1"/>
    <property type="molecule type" value="Genomic_DNA"/>
</dbReference>
<dbReference type="EMBL" id="AY329372">
    <property type="protein sequence ID" value="AAP92114.1"/>
    <property type="molecule type" value="mRNA"/>
</dbReference>
<dbReference type="PIR" id="A48170">
    <property type="entry name" value="UTPGB"/>
</dbReference>
<dbReference type="RefSeq" id="NP_999245.1">
    <property type="nucleotide sequence ID" value="NM_214080.1"/>
</dbReference>
<dbReference type="RefSeq" id="XP_020949176.1">
    <property type="nucleotide sequence ID" value="XM_021093517.1"/>
</dbReference>
<dbReference type="RefSeq" id="XP_020949177.1">
    <property type="nucleotide sequence ID" value="XM_021093518.1"/>
</dbReference>
<dbReference type="RefSeq" id="XP_020949178.1">
    <property type="nucleotide sequence ID" value="XM_021093519.1"/>
</dbReference>
<dbReference type="SMR" id="P01232"/>
<dbReference type="FunCoup" id="P01232">
    <property type="interactions" value="96"/>
</dbReference>
<dbReference type="STRING" id="9823.ENSSSCP00000039170"/>
<dbReference type="GlyCosmos" id="P01232">
    <property type="glycosylation" value="1 site, No reported glycans"/>
</dbReference>
<dbReference type="GlyGen" id="P01232">
    <property type="glycosylation" value="2 sites"/>
</dbReference>
<dbReference type="iPTMnet" id="P01232"/>
<dbReference type="PaxDb" id="9823-ENSSSCP00000003414"/>
<dbReference type="Ensembl" id="ENSSSCT00015021366.1">
    <property type="protein sequence ID" value="ENSSSCP00015008399.1"/>
    <property type="gene ID" value="ENSSSCG00015016126.1"/>
</dbReference>
<dbReference type="Ensembl" id="ENSSSCT00040019465.1">
    <property type="protein sequence ID" value="ENSSSCP00040008063.1"/>
    <property type="gene ID" value="ENSSSCG00040014539.1"/>
</dbReference>
<dbReference type="Ensembl" id="ENSSSCT00045021755.1">
    <property type="protein sequence ID" value="ENSSSCP00045014966.1"/>
    <property type="gene ID" value="ENSSSCG00045012778.1"/>
</dbReference>
<dbReference type="Ensembl" id="ENSSSCT00055013332.1">
    <property type="protein sequence ID" value="ENSSSCP00055010483.1"/>
    <property type="gene ID" value="ENSSSCG00055006892.1"/>
</dbReference>
<dbReference type="Ensembl" id="ENSSSCT00060107671.1">
    <property type="protein sequence ID" value="ENSSSCP00060047770.1"/>
    <property type="gene ID" value="ENSSSCG00060078080.1"/>
</dbReference>
<dbReference type="Ensembl" id="ENSSSCT00065074311.1">
    <property type="protein sequence ID" value="ENSSSCP00065032373.1"/>
    <property type="gene ID" value="ENSSSCG00065054246.1"/>
</dbReference>
<dbReference type="Ensembl" id="ENSSSCT00070055627.1">
    <property type="protein sequence ID" value="ENSSSCP00070047244.1"/>
    <property type="gene ID" value="ENSSSCG00070027728.1"/>
</dbReference>
<dbReference type="Ensembl" id="ENSSSCT00115021545">
    <property type="protein sequence ID" value="ENSSSCP00115020401"/>
    <property type="gene ID" value="ENSSSCG00115012468"/>
</dbReference>
<dbReference type="Ensembl" id="ENSSSCT00130070944">
    <property type="protein sequence ID" value="ENSSSCP00130051291"/>
    <property type="gene ID" value="ENSSSCG00130036207"/>
</dbReference>
<dbReference type="GeneID" id="397153"/>
<dbReference type="KEGG" id="ssc:397153"/>
<dbReference type="CTD" id="3972"/>
<dbReference type="eggNOG" id="ENOG502S49V">
    <property type="taxonomic scope" value="Eukaryota"/>
</dbReference>
<dbReference type="HOGENOM" id="CLU_126319_0_0_1"/>
<dbReference type="InParanoid" id="P01232"/>
<dbReference type="OMA" id="YHELHFA"/>
<dbReference type="OrthoDB" id="8453657at2759"/>
<dbReference type="TreeFam" id="TF332940"/>
<dbReference type="Reactome" id="R-SSC-193048">
    <property type="pathway name" value="Androgen biosynthesis"/>
</dbReference>
<dbReference type="Reactome" id="R-SSC-193993">
    <property type="pathway name" value="Mineralocorticoid biosynthesis"/>
</dbReference>
<dbReference type="Reactome" id="R-SSC-209822">
    <property type="pathway name" value="Glycoprotein hormones"/>
</dbReference>
<dbReference type="Reactome" id="R-SSC-375281">
    <property type="pathway name" value="Hormone ligand-binding receptors"/>
</dbReference>
<dbReference type="Reactome" id="R-SSC-418555">
    <property type="pathway name" value="G alpha (s) signalling events"/>
</dbReference>
<dbReference type="Reactome" id="R-SSC-8866910">
    <property type="pathway name" value="TFAP2 (AP-2) family regulates transcription of growth factors and their receptors"/>
</dbReference>
<dbReference type="Reactome" id="R-SSC-975578">
    <property type="pathway name" value="Reactions specific to the complex N-glycan synthesis pathway"/>
</dbReference>
<dbReference type="Proteomes" id="UP000008227">
    <property type="component" value="Unplaced"/>
</dbReference>
<dbReference type="Proteomes" id="UP000314985">
    <property type="component" value="Chromosome 6"/>
</dbReference>
<dbReference type="Proteomes" id="UP000694570">
    <property type="component" value="Unplaced"/>
</dbReference>
<dbReference type="Proteomes" id="UP000694571">
    <property type="component" value="Unplaced"/>
</dbReference>
<dbReference type="Proteomes" id="UP000694720">
    <property type="component" value="Unplaced"/>
</dbReference>
<dbReference type="Proteomes" id="UP000694722">
    <property type="component" value="Unplaced"/>
</dbReference>
<dbReference type="Proteomes" id="UP000694723">
    <property type="component" value="Unplaced"/>
</dbReference>
<dbReference type="Proteomes" id="UP000694724">
    <property type="component" value="Unplaced"/>
</dbReference>
<dbReference type="Proteomes" id="UP000694725">
    <property type="component" value="Unplaced"/>
</dbReference>
<dbReference type="Proteomes" id="UP000694726">
    <property type="component" value="Unplaced"/>
</dbReference>
<dbReference type="Proteomes" id="UP000694727">
    <property type="component" value="Unplaced"/>
</dbReference>
<dbReference type="Proteomes" id="UP000694728">
    <property type="component" value="Unplaced"/>
</dbReference>
<dbReference type="GO" id="GO:0005737">
    <property type="term" value="C:cytoplasm"/>
    <property type="evidence" value="ECO:0000318"/>
    <property type="project" value="GO_Central"/>
</dbReference>
<dbReference type="GO" id="GO:0005615">
    <property type="term" value="C:extracellular space"/>
    <property type="evidence" value="ECO:0000318"/>
    <property type="project" value="GO_Central"/>
</dbReference>
<dbReference type="GO" id="GO:0005179">
    <property type="term" value="F:hormone activity"/>
    <property type="evidence" value="ECO:0007669"/>
    <property type="project" value="UniProtKB-KW"/>
</dbReference>
<dbReference type="GO" id="GO:0007186">
    <property type="term" value="P:G protein-coupled receptor signaling pathway"/>
    <property type="evidence" value="ECO:0000318"/>
    <property type="project" value="GO_Central"/>
</dbReference>
<dbReference type="CDD" id="cd00069">
    <property type="entry name" value="GHB_like"/>
    <property type="match status" value="1"/>
</dbReference>
<dbReference type="FunFam" id="2.10.90.10:FF:000007">
    <property type="entry name" value="Luteinizing hormone beta subunit"/>
    <property type="match status" value="1"/>
</dbReference>
<dbReference type="Gene3D" id="2.10.90.10">
    <property type="entry name" value="Cystine-knot cytokines"/>
    <property type="match status" value="1"/>
</dbReference>
<dbReference type="InterPro" id="IPR029034">
    <property type="entry name" value="Cystine-knot_cytokine"/>
</dbReference>
<dbReference type="InterPro" id="IPR006208">
    <property type="entry name" value="Glyco_hormone_CN"/>
</dbReference>
<dbReference type="InterPro" id="IPR001545">
    <property type="entry name" value="Gonadotropin_bsu"/>
</dbReference>
<dbReference type="InterPro" id="IPR018245">
    <property type="entry name" value="Gonadotropin_bsu_CS"/>
</dbReference>
<dbReference type="PANTHER" id="PTHR11515">
    <property type="entry name" value="GLYCOPROTEIN HORMONE BETA CHAIN"/>
    <property type="match status" value="1"/>
</dbReference>
<dbReference type="PANTHER" id="PTHR11515:SF11">
    <property type="entry name" value="LUTROPIN SUBUNIT BETA"/>
    <property type="match status" value="1"/>
</dbReference>
<dbReference type="Pfam" id="PF00007">
    <property type="entry name" value="Cys_knot"/>
    <property type="match status" value="1"/>
</dbReference>
<dbReference type="SMART" id="SM00068">
    <property type="entry name" value="GHB"/>
    <property type="match status" value="1"/>
</dbReference>
<dbReference type="SUPFAM" id="SSF57501">
    <property type="entry name" value="Cystine-knot cytokines"/>
    <property type="match status" value="1"/>
</dbReference>
<dbReference type="PROSITE" id="PS00261">
    <property type="entry name" value="GLYCO_HORMONE_BETA_1"/>
    <property type="match status" value="1"/>
</dbReference>
<dbReference type="PROSITE" id="PS00689">
    <property type="entry name" value="GLYCO_HORMONE_BETA_2"/>
    <property type="match status" value="1"/>
</dbReference>
<organism>
    <name type="scientific">Sus scrofa</name>
    <name type="common">Pig</name>
    <dbReference type="NCBI Taxonomy" id="9823"/>
    <lineage>
        <taxon>Eukaryota</taxon>
        <taxon>Metazoa</taxon>
        <taxon>Chordata</taxon>
        <taxon>Craniata</taxon>
        <taxon>Vertebrata</taxon>
        <taxon>Euteleostomi</taxon>
        <taxon>Mammalia</taxon>
        <taxon>Eutheria</taxon>
        <taxon>Laurasiatheria</taxon>
        <taxon>Artiodactyla</taxon>
        <taxon>Suina</taxon>
        <taxon>Suidae</taxon>
        <taxon>Sus</taxon>
    </lineage>
</organism>
<sequence length="141" mass="14889">MEMLQGLLLWLLLSVAGVWASRGPLRPLCRPINATLAAENEACPVCITFTTSICAGYCPSMVRVLPAALPPVPQPVCTYRELSFASIRLPGCPPGVDPTVSFPVALSCHCGPCRLSSSDCGGPRAQPLACDRPLLPGLLFL</sequence>
<reference key="1">
    <citation type="journal article" date="1989" name="Mol. Cell. Endocrinol.">
        <title>Cloning and DNA sequence analysis of the cDNA for the precursor of porcine luteinizing hormone (LH) beta subunit.</title>
        <authorList>
            <person name="Kato Y."/>
            <person name="Hirai T."/>
        </authorList>
    </citation>
    <scope>NUCLEOTIDE SEQUENCE [MRNA]</scope>
</reference>
<reference key="2">
    <citation type="journal article" date="1990" name="J. Mol. Endocrinol.">
        <title>The gene for the beta subunit of porcine LH: clusters of GC boxes and CACCC elements.</title>
        <authorList>
            <person name="Ezashi T."/>
            <person name="Hirai T."/>
            <person name="Kato T."/>
            <person name="Wakabayashi K."/>
            <person name="Kato Y."/>
        </authorList>
    </citation>
    <scope>NUCLEOTIDE SEQUENCE [GENOMIC DNA]</scope>
</reference>
<reference key="3">
    <citation type="submission" date="2003-06" db="EMBL/GenBank/DDBJ databases">
        <title>The sequence and expression of Meishan porcine LH-beta gene.</title>
        <authorList>
            <person name="Lv X."/>
            <person name="Gao R."/>
            <person name="Liu S."/>
            <person name="Li J."/>
        </authorList>
    </citation>
    <scope>NUCLEOTIDE SEQUENCE [MRNA] OF 3-141</scope>
    <source>
        <strain>Meishan</strain>
        <tissue>Pituitary anterior lobe</tissue>
    </source>
</reference>
<reference key="4">
    <citation type="journal article" date="1973" name="Eur. J. Biochem.">
        <title>Luteinizing hormone. The primary structures of the beta-subunit from bovine and porcine species.</title>
        <authorList>
            <person name="Maghuin-Rogister G."/>
            <person name="Hennen G."/>
        </authorList>
    </citation>
    <scope>PROTEIN SEQUENCE OF 21-139</scope>
</reference>
<comment type="function">
    <text>Promotes spermatogenesis and ovulation by stimulating the testes and ovaries to synthesize steroids.</text>
</comment>
<comment type="subunit">
    <text>Heterodimer of a common alpha chain and a unique beta chain which confers biological specificity to thyrotropin, lutropin, follitropin and gonadotropin.</text>
</comment>
<comment type="subcellular location">
    <subcellularLocation>
        <location>Secreted</location>
    </subcellularLocation>
</comment>
<comment type="similarity">
    <text evidence="3">Belongs to the glycoprotein hormones subunit beta family.</text>
</comment>
<keyword id="KW-0903">Direct protein sequencing</keyword>
<keyword id="KW-1015">Disulfide bond</keyword>
<keyword id="KW-0325">Glycoprotein</keyword>
<keyword id="KW-0372">Hormone</keyword>
<keyword id="KW-1185">Reference proteome</keyword>
<keyword id="KW-0964">Secreted</keyword>
<keyword id="KW-0732">Signal</keyword>
<accession>P01232</accession>
<accession>Q7YRL0</accession>
<gene>
    <name type="primary">LHB</name>
</gene>
<proteinExistence type="evidence at protein level"/>
<feature type="signal peptide" evidence="2">
    <location>
        <begin position="1"/>
        <end position="20"/>
    </location>
</feature>
<feature type="chain" id="PRO_0000011732" description="Lutropin subunit beta" evidence="2">
    <location>
        <begin position="21"/>
        <end position="141"/>
    </location>
</feature>
<feature type="modified residue" description="Blocked amino end (Ser)" evidence="2">
    <location>
        <position position="21"/>
    </location>
</feature>
<feature type="glycosylation site" description="N-linked (GlcNAc...) asparagine" evidence="2">
    <location>
        <position position="33"/>
    </location>
</feature>
<feature type="disulfide bond" evidence="1">
    <location>
        <begin position="29"/>
        <end position="77"/>
    </location>
</feature>
<feature type="disulfide bond" evidence="1">
    <location>
        <begin position="43"/>
        <end position="92"/>
    </location>
</feature>
<feature type="disulfide bond" evidence="1">
    <location>
        <begin position="46"/>
        <end position="130"/>
    </location>
</feature>
<feature type="disulfide bond" evidence="1">
    <location>
        <begin position="54"/>
        <end position="108"/>
    </location>
</feature>
<feature type="disulfide bond" evidence="1">
    <location>
        <begin position="58"/>
        <end position="110"/>
    </location>
</feature>
<feature type="disulfide bond" evidence="1">
    <location>
        <begin position="113"/>
        <end position="120"/>
    </location>
</feature>
<feature type="sequence variant">
    <original>R</original>
    <variation>Z</variation>
    <location>
        <position position="30"/>
    </location>
</feature>
<feature type="sequence conflict" description="In Ref. 3; AAP92114." evidence="3" ref="3">
    <original>G</original>
    <variation>R</variation>
    <location>
        <position position="6"/>
    </location>
</feature>
<feature type="sequence conflict" description="In Ref. 4; AA sequence." evidence="3" ref="4">
    <original>N</original>
    <variation>D</variation>
    <location>
        <position position="40"/>
    </location>
</feature>
<feature type="sequence conflict" description="In Ref. 3; AAP92114." evidence="3" ref="3">
    <original>Y</original>
    <variation>D</variation>
    <location>
        <position position="57"/>
    </location>
</feature>
<feature type="sequence conflict" description="In Ref. 4; AA sequence." evidence="3" ref="4">
    <original>V</original>
    <variation>R</variation>
    <location>
        <position position="62"/>
    </location>
</feature>
<feature type="sequence conflict" description="In Ref. 4; AA sequence." evidence="3" ref="4">
    <original>S</original>
    <variation>I</variation>
    <location>
        <position position="83"/>
    </location>
</feature>
<feature type="sequence conflict" description="In Ref. 4; AA sequence." evidence="3" ref="4">
    <original>I</original>
    <variation>S</variation>
    <location>
        <position position="87"/>
    </location>
</feature>
<feature type="sequence conflict" description="In Ref. 4; AA sequence." evidence="3" ref="4">
    <original>GP</original>
    <variation>PG</variation>
    <location>
        <begin position="122"/>
        <end position="123"/>
    </location>
</feature>
<protein>
    <recommendedName>
        <fullName>Lutropin subunit beta</fullName>
        <shortName>Lutropin beta chain</shortName>
    </recommendedName>
    <alternativeName>
        <fullName>Luteinizing hormone subunit beta</fullName>
        <shortName>LH-B</shortName>
        <shortName>LSH-B</shortName>
        <shortName>LSH-beta</shortName>
    </alternativeName>
</protein>